<comment type="function">
    <text evidence="1">Probably functions as a manganese efflux pump.</text>
</comment>
<comment type="subcellular location">
    <subcellularLocation>
        <location evidence="1">Cell inner membrane</location>
        <topology evidence="1">Multi-pass membrane protein</topology>
    </subcellularLocation>
</comment>
<comment type="similarity">
    <text evidence="1">Belongs to the MntP (TC 9.B.29) family.</text>
</comment>
<protein>
    <recommendedName>
        <fullName evidence="1">Probable manganese efflux pump MntP</fullName>
    </recommendedName>
</protein>
<reference key="1">
    <citation type="journal article" date="2009" name="PLoS Genet.">
        <title>Organised genome dynamics in the Escherichia coli species results in highly diverse adaptive paths.</title>
        <authorList>
            <person name="Touchon M."/>
            <person name="Hoede C."/>
            <person name="Tenaillon O."/>
            <person name="Barbe V."/>
            <person name="Baeriswyl S."/>
            <person name="Bidet P."/>
            <person name="Bingen E."/>
            <person name="Bonacorsi S."/>
            <person name="Bouchier C."/>
            <person name="Bouvet O."/>
            <person name="Calteau A."/>
            <person name="Chiapello H."/>
            <person name="Clermont O."/>
            <person name="Cruveiller S."/>
            <person name="Danchin A."/>
            <person name="Diard M."/>
            <person name="Dossat C."/>
            <person name="Karoui M.E."/>
            <person name="Frapy E."/>
            <person name="Garry L."/>
            <person name="Ghigo J.M."/>
            <person name="Gilles A.M."/>
            <person name="Johnson J."/>
            <person name="Le Bouguenec C."/>
            <person name="Lescat M."/>
            <person name="Mangenot S."/>
            <person name="Martinez-Jehanne V."/>
            <person name="Matic I."/>
            <person name="Nassif X."/>
            <person name="Oztas S."/>
            <person name="Petit M.A."/>
            <person name="Pichon C."/>
            <person name="Rouy Z."/>
            <person name="Ruf C.S."/>
            <person name="Schneider D."/>
            <person name="Tourret J."/>
            <person name="Vacherie B."/>
            <person name="Vallenet D."/>
            <person name="Medigue C."/>
            <person name="Rocha E.P.C."/>
            <person name="Denamur E."/>
        </authorList>
    </citation>
    <scope>NUCLEOTIDE SEQUENCE [LARGE SCALE GENOMIC DNA]</scope>
    <source>
        <strain>UMN026 / ExPEC</strain>
    </source>
</reference>
<keyword id="KW-0997">Cell inner membrane</keyword>
<keyword id="KW-1003">Cell membrane</keyword>
<keyword id="KW-0406">Ion transport</keyword>
<keyword id="KW-0464">Manganese</keyword>
<keyword id="KW-0472">Membrane</keyword>
<keyword id="KW-0812">Transmembrane</keyword>
<keyword id="KW-1133">Transmembrane helix</keyword>
<keyword id="KW-0813">Transport</keyword>
<sequence length="188" mass="20117">MNITATVLLAFGMSMDAFAASIGKGATLHKPKFSEALRTGLIFGAVETLTPLIGWGMGMLASRFVLEWNHWIAFVLLIFLGGRMIIEGFRGADDEDEEPRRRHGFWLLVTTAIATSLDAMAVGVGLAFLQVNIIATALAIGCATLIMSTLGMMVGRFIGSIIGKKAEILGGLVLIGIGVQILWTHFHG</sequence>
<accession>B7NBG8</accession>
<dbReference type="EMBL" id="CU928163">
    <property type="protein sequence ID" value="CAR13308.1"/>
    <property type="molecule type" value="Genomic_DNA"/>
</dbReference>
<dbReference type="RefSeq" id="WP_001296134.1">
    <property type="nucleotide sequence ID" value="NC_011751.1"/>
</dbReference>
<dbReference type="RefSeq" id="YP_002412839.1">
    <property type="nucleotide sequence ID" value="NC_011751.1"/>
</dbReference>
<dbReference type="STRING" id="585056.ECUMN_2114"/>
<dbReference type="GeneID" id="93776070"/>
<dbReference type="KEGG" id="eum:ECUMN_2114"/>
<dbReference type="PATRIC" id="fig|585056.7.peg.2300"/>
<dbReference type="HOGENOM" id="CLU_096410_0_0_6"/>
<dbReference type="Proteomes" id="UP000007097">
    <property type="component" value="Chromosome"/>
</dbReference>
<dbReference type="GO" id="GO:0005886">
    <property type="term" value="C:plasma membrane"/>
    <property type="evidence" value="ECO:0007669"/>
    <property type="project" value="UniProtKB-SubCell"/>
</dbReference>
<dbReference type="GO" id="GO:0005384">
    <property type="term" value="F:manganese ion transmembrane transporter activity"/>
    <property type="evidence" value="ECO:0007669"/>
    <property type="project" value="UniProtKB-UniRule"/>
</dbReference>
<dbReference type="HAMAP" id="MF_01521">
    <property type="entry name" value="MntP_pump"/>
    <property type="match status" value="1"/>
</dbReference>
<dbReference type="InterPro" id="IPR003810">
    <property type="entry name" value="Mntp/YtaF"/>
</dbReference>
<dbReference type="InterPro" id="IPR022929">
    <property type="entry name" value="Put_MntP"/>
</dbReference>
<dbReference type="NCBIfam" id="NF008546">
    <property type="entry name" value="PRK11469.1"/>
    <property type="match status" value="1"/>
</dbReference>
<dbReference type="PANTHER" id="PTHR35529">
    <property type="entry name" value="MANGANESE EFFLUX PUMP MNTP-RELATED"/>
    <property type="match status" value="1"/>
</dbReference>
<dbReference type="PANTHER" id="PTHR35529:SF1">
    <property type="entry name" value="MANGANESE EFFLUX PUMP MNTP-RELATED"/>
    <property type="match status" value="1"/>
</dbReference>
<dbReference type="Pfam" id="PF02659">
    <property type="entry name" value="Mntp"/>
    <property type="match status" value="1"/>
</dbReference>
<feature type="chain" id="PRO_1000200027" description="Probable manganese efflux pump MntP">
    <location>
        <begin position="1"/>
        <end position="188"/>
    </location>
</feature>
<feature type="transmembrane region" description="Helical" evidence="1">
    <location>
        <begin position="3"/>
        <end position="23"/>
    </location>
</feature>
<feature type="transmembrane region" description="Helical" evidence="1">
    <location>
        <begin position="66"/>
        <end position="86"/>
    </location>
</feature>
<feature type="transmembrane region" description="Helical" evidence="1">
    <location>
        <begin position="106"/>
        <end position="128"/>
    </location>
</feature>
<feature type="transmembrane region" description="Helical" evidence="1">
    <location>
        <begin position="143"/>
        <end position="163"/>
    </location>
</feature>
<feature type="transmembrane region" description="Helical" evidence="1">
    <location>
        <begin position="168"/>
        <end position="188"/>
    </location>
</feature>
<gene>
    <name evidence="1" type="primary">mntP</name>
    <name type="synonym">yebN</name>
    <name type="ordered locus">ECUMN_2114</name>
</gene>
<proteinExistence type="inferred from homology"/>
<organism>
    <name type="scientific">Escherichia coli O17:K52:H18 (strain UMN026 / ExPEC)</name>
    <dbReference type="NCBI Taxonomy" id="585056"/>
    <lineage>
        <taxon>Bacteria</taxon>
        <taxon>Pseudomonadati</taxon>
        <taxon>Pseudomonadota</taxon>
        <taxon>Gammaproteobacteria</taxon>
        <taxon>Enterobacterales</taxon>
        <taxon>Enterobacteriaceae</taxon>
        <taxon>Escherichia</taxon>
    </lineage>
</organism>
<evidence type="ECO:0000255" key="1">
    <source>
        <dbReference type="HAMAP-Rule" id="MF_01521"/>
    </source>
</evidence>
<name>MNTP_ECOLU</name>